<sequence>MDRRRMPLWALLLLWSPCTFSLPTGTTFERIPLKKMPSVREILEERGVDMTRLSAEWDVFTKRSSLTDLISPVVLTNYLNSQYYGEIGIGTPPQTFKVIFDTGSANLWVPSTKCSRLYLACGIHSLYESSDSSSYMENGDDFTIHYGSGRVKGFLSQDSVTVGGITVTQTFGEVTELPLIPFMLAQFDGVLGMGFPAQAVGGVTPVFDHILSQGVLKEKVFSVYYNRGPHLLGGEVVLGGSDPEHYQGDFHYVSLSKTDSWQITMKGVSVGSSTLLCEEGCEVVVDTGSSFISAPTSSLKLIMQALGAKEKRLHEYVVSCSQVPTLPDISFNLGGRAYTLSSTDYVLQYPNRRDKLCTVALHAMDIPPPTGPVWVLGATFIRKFYTEFDRHNNRIGFALAR</sequence>
<keyword id="KW-0002">3D-structure</keyword>
<keyword id="KW-0064">Aspartyl protease</keyword>
<keyword id="KW-0165">Cleavage on pair of basic residues</keyword>
<keyword id="KW-0903">Direct protein sequencing</keyword>
<keyword id="KW-1015">Disulfide bond</keyword>
<keyword id="KW-0378">Hydrolase</keyword>
<keyword id="KW-0645">Protease</keyword>
<keyword id="KW-1185">Reference proteome</keyword>
<keyword id="KW-0964">Secreted</keyword>
<keyword id="KW-0732">Signal</keyword>
<keyword id="KW-0865">Zymogen</keyword>
<accession>P00796</accession>
<accession>P70229</accession>
<accession>P97955</accession>
<accession>Q62155</accession>
<name>RENI2_MOUSE</name>
<protein>
    <recommendedName>
        <fullName>Renin-2</fullName>
        <ecNumber evidence="1">3.4.23.15</ecNumber>
    </recommendedName>
    <alternativeName>
        <fullName>Angiotensinogenase</fullName>
    </alternativeName>
    <alternativeName>
        <fullName>Submandibular gland renin</fullName>
    </alternativeName>
    <component>
        <recommendedName>
            <fullName>Renin-2 heavy chain</fullName>
        </recommendedName>
    </component>
    <component>
        <recommendedName>
            <fullName>Renin-2 light chain</fullName>
        </recommendedName>
    </component>
</protein>
<comment type="function">
    <text evidence="1">Renin is a highly specific endopeptidase, related to pepsin, whose only known function is to generate angiotensin I from angiotensinogen in the plasma, initiating a cascade of reactions that produce an elevation of blood pressure and increased sodium retention by the kidney.</text>
</comment>
<comment type="catalytic activity">
    <reaction evidence="1">
        <text>Cleavage of Leu-|-Xaa bond in angiotensinogen to generate angiotensin I.</text>
        <dbReference type="EC" id="3.4.23.15"/>
    </reaction>
</comment>
<comment type="subunit">
    <text evidence="5">Dimer of a heavy chain and a light chain joined by a disulfide bond.</text>
</comment>
<comment type="subcellular location">
    <subcellularLocation>
        <location evidence="1">Secreted</location>
    </subcellularLocation>
</comment>
<comment type="tissue specificity">
    <text evidence="4">Submandibular gland.</text>
</comment>
<comment type="polymorphism">
    <text>Present as a single-copy gene in strains such as BALB/c and C57BL/6 while some strains such as Swiss and Akr contain two copies.</text>
</comment>
<comment type="miscellaneous">
    <text>The active enzyme isolated from the submandibular gland has catalytic and antigenic activities similar to renal renin.</text>
</comment>
<comment type="similarity">
    <text evidence="7">Belongs to the peptidase A1 family.</text>
</comment>
<organism>
    <name type="scientific">Mus musculus</name>
    <name type="common">Mouse</name>
    <dbReference type="NCBI Taxonomy" id="10090"/>
    <lineage>
        <taxon>Eukaryota</taxon>
        <taxon>Metazoa</taxon>
        <taxon>Chordata</taxon>
        <taxon>Craniata</taxon>
        <taxon>Vertebrata</taxon>
        <taxon>Euteleostomi</taxon>
        <taxon>Mammalia</taxon>
        <taxon>Eutheria</taxon>
        <taxon>Euarchontoglires</taxon>
        <taxon>Glires</taxon>
        <taxon>Rodentia</taxon>
        <taxon>Myomorpha</taxon>
        <taxon>Muroidea</taxon>
        <taxon>Muridae</taxon>
        <taxon>Murinae</taxon>
        <taxon>Mus</taxon>
        <taxon>Mus</taxon>
    </lineage>
</organism>
<feature type="signal peptide" evidence="7">
    <location>
        <begin position="1"/>
        <end position="25"/>
    </location>
</feature>
<feature type="propeptide" id="PRO_0000026095" description="Activation peptide" evidence="5">
    <location>
        <begin position="26"/>
        <end position="63"/>
    </location>
</feature>
<feature type="chain" id="PRO_0000026096" description="Renin-2">
    <location>
        <begin position="64"/>
        <end position="401"/>
    </location>
</feature>
<feature type="chain" id="PRO_0000026097" description="Renin-2 heavy chain" evidence="8">
    <location>
        <begin position="64"/>
        <end position="351"/>
    </location>
</feature>
<feature type="chain" id="PRO_0000026098" description="Renin-2 light chain" evidence="8">
    <location>
        <begin position="354"/>
        <end position="401"/>
    </location>
</feature>
<feature type="domain" description="Peptidase A1" evidence="2">
    <location>
        <begin position="83"/>
        <end position="398"/>
    </location>
</feature>
<feature type="active site" evidence="3">
    <location>
        <position position="101"/>
    </location>
</feature>
<feature type="active site" evidence="3">
    <location>
        <position position="286"/>
    </location>
</feature>
<feature type="disulfide bond" evidence="3">
    <location>
        <begin position="114"/>
        <end position="121"/>
    </location>
</feature>
<feature type="disulfide bond" evidence="3">
    <location>
        <begin position="277"/>
        <end position="281"/>
    </location>
</feature>
<feature type="disulfide bond" evidence="3">
    <location>
        <begin position="320"/>
        <end position="357"/>
    </location>
</feature>
<feature type="sequence conflict" description="In Ref. 5; AAA40047." evidence="7" ref="5">
    <original>L</original>
    <variation>W</variation>
    <location>
        <position position="13"/>
    </location>
</feature>
<feature type="sequence conflict" description="In Ref. 2; AAA40050." evidence="7" ref="2">
    <original>I</original>
    <variation>M</variation>
    <location>
        <position position="99"/>
    </location>
</feature>
<feature type="sequence conflict" description="In Ref. 2; AAA40050." evidence="7" ref="2">
    <original>FPAQ</original>
    <variation>LSRS</variation>
    <location>
        <begin position="195"/>
        <end position="198"/>
    </location>
</feature>
<feature type="sequence conflict" description="In Ref. 2; AAA40050." evidence="7" ref="2">
    <original>I</original>
    <variation>V</variation>
    <location>
        <position position="395"/>
    </location>
</feature>
<feature type="strand" evidence="10">
    <location>
        <begin position="71"/>
        <end position="78"/>
    </location>
</feature>
<feature type="turn" evidence="10">
    <location>
        <begin position="79"/>
        <end position="81"/>
    </location>
</feature>
<feature type="strand" evidence="10">
    <location>
        <begin position="82"/>
        <end position="89"/>
    </location>
</feature>
<feature type="turn" evidence="10">
    <location>
        <begin position="90"/>
        <end position="93"/>
    </location>
</feature>
<feature type="strand" evidence="10">
    <location>
        <begin position="94"/>
        <end position="101"/>
    </location>
</feature>
<feature type="strand" evidence="10">
    <location>
        <begin position="107"/>
        <end position="111"/>
    </location>
</feature>
<feature type="helix" evidence="10">
    <location>
        <begin position="119"/>
        <end position="123"/>
    </location>
</feature>
<feature type="helix" evidence="10">
    <location>
        <begin position="129"/>
        <end position="131"/>
    </location>
</feature>
<feature type="strand" evidence="10">
    <location>
        <begin position="136"/>
        <end position="146"/>
    </location>
</feature>
<feature type="strand" evidence="10">
    <location>
        <begin position="149"/>
        <end position="162"/>
    </location>
</feature>
<feature type="strand" evidence="10">
    <location>
        <begin position="165"/>
        <end position="176"/>
    </location>
</feature>
<feature type="helix" evidence="10">
    <location>
        <begin position="179"/>
        <end position="182"/>
    </location>
</feature>
<feature type="strand" evidence="10">
    <location>
        <begin position="186"/>
        <end position="192"/>
    </location>
</feature>
<feature type="helix" evidence="10">
    <location>
        <begin position="196"/>
        <end position="198"/>
    </location>
</feature>
<feature type="helix" evidence="10">
    <location>
        <begin position="200"/>
        <end position="202"/>
    </location>
</feature>
<feature type="helix" evidence="10">
    <location>
        <begin position="206"/>
        <end position="212"/>
    </location>
</feature>
<feature type="strand" evidence="10">
    <location>
        <begin position="216"/>
        <end position="225"/>
    </location>
</feature>
<feature type="strand" evidence="10">
    <location>
        <begin position="228"/>
        <end position="231"/>
    </location>
</feature>
<feature type="strand" evidence="10">
    <location>
        <begin position="234"/>
        <end position="240"/>
    </location>
</feature>
<feature type="helix" evidence="10">
    <location>
        <begin position="243"/>
        <end position="245"/>
    </location>
</feature>
<feature type="strand" evidence="10">
    <location>
        <begin position="246"/>
        <end position="254"/>
    </location>
</feature>
<feature type="turn" evidence="10">
    <location>
        <begin position="258"/>
        <end position="261"/>
    </location>
</feature>
<feature type="strand" evidence="10">
    <location>
        <begin position="262"/>
        <end position="270"/>
    </location>
</feature>
<feature type="strand" evidence="10">
    <location>
        <begin position="281"/>
        <end position="285"/>
    </location>
</feature>
<feature type="strand" evidence="10">
    <location>
        <begin position="289"/>
        <end position="294"/>
    </location>
</feature>
<feature type="helix" evidence="10">
    <location>
        <begin position="296"/>
        <end position="306"/>
    </location>
</feature>
<feature type="strand" evidence="10">
    <location>
        <begin position="309"/>
        <end position="312"/>
    </location>
</feature>
<feature type="strand" evidence="10">
    <location>
        <begin position="315"/>
        <end position="319"/>
    </location>
</feature>
<feature type="helix" evidence="10">
    <location>
        <begin position="320"/>
        <end position="325"/>
    </location>
</feature>
<feature type="strand" evidence="10">
    <location>
        <begin position="329"/>
        <end position="333"/>
    </location>
</feature>
<feature type="strand" evidence="10">
    <location>
        <begin position="336"/>
        <end position="340"/>
    </location>
</feature>
<feature type="helix" evidence="10">
    <location>
        <begin position="342"/>
        <end position="345"/>
    </location>
</feature>
<feature type="strand" evidence="10">
    <location>
        <begin position="356"/>
        <end position="363"/>
    </location>
</feature>
<feature type="turn" evidence="10">
    <location>
        <begin position="368"/>
        <end position="370"/>
    </location>
</feature>
<feature type="strand" evidence="10">
    <location>
        <begin position="374"/>
        <end position="376"/>
    </location>
</feature>
<feature type="helix" evidence="10">
    <location>
        <begin position="378"/>
        <end position="381"/>
    </location>
</feature>
<feature type="strand" evidence="10">
    <location>
        <begin position="384"/>
        <end position="389"/>
    </location>
</feature>
<feature type="turn" evidence="10">
    <location>
        <begin position="390"/>
        <end position="393"/>
    </location>
</feature>
<feature type="strand" evidence="10">
    <location>
        <begin position="394"/>
        <end position="400"/>
    </location>
</feature>
<reference key="1">
    <citation type="journal article" date="1982" name="Proc. Natl. Acad. Sci. U.S.A.">
        <title>Amino acid sequence of mouse submaxillary gland renin.</title>
        <authorList>
            <person name="Misono K.S."/>
            <person name="Chang J.-J."/>
            <person name="Inagami T."/>
        </authorList>
    </citation>
    <scope>PROTEIN SEQUENCE OF 64-351 AND 354-401</scope>
</reference>
<reference key="2">
    <citation type="journal article" date="1982" name="Nature">
        <title>Complete amino acid sequence and maturation of the mouse submaxillary gland renin precursor.</title>
        <authorList>
            <person name="Panthier J.-J."/>
            <person name="Foote S."/>
            <person name="Chambraud B."/>
            <person name="Strosberg A.D."/>
            <person name="Corvol P."/>
            <person name="Rougeon F."/>
        </authorList>
    </citation>
    <scope>NUCLEOTIDE SEQUENCE [MRNA]</scope>
</reference>
<reference key="3">
    <citation type="journal article" date="2004" name="Genome Res.">
        <title>The status, quality, and expansion of the NIH full-length cDNA project: the Mammalian Gene Collection (MGC).</title>
        <authorList>
            <consortium name="The MGC Project Team"/>
        </authorList>
    </citation>
    <scope>NUCLEOTIDE SEQUENCE [LARGE SCALE MRNA]</scope>
    <source>
        <strain>FVB/N</strain>
        <tissue>Salivary gland</tissue>
    </source>
</reference>
<reference key="4">
    <citation type="journal article" date="1984" name="Proc. Natl. Acad. Sci. U.S.A.">
        <title>Mouse kidney and submaxillary gland renin genes differ in their 5' putative regulatory sequences.</title>
        <authorList>
            <person name="Panthier J.-J."/>
            <person name="Dreyfus M."/>
            <person name="Roux D.T.L."/>
            <person name="Rougeon F."/>
        </authorList>
    </citation>
    <scope>NUCLEOTIDE SEQUENCE [GENOMIC DNA] OF 1-29</scope>
</reference>
<reference key="5">
    <citation type="journal article" date="1989" name="Gene">
        <title>The nucleotide sequence of a mouse renin-encoding gene, Ren-1d, and its upstream region.</title>
        <authorList>
            <person name="Burt D.W."/>
            <person name="Mullins L.J."/>
            <person name="George H."/>
            <person name="Smith G."/>
            <person name="Brooks J."/>
            <person name="Pioli D."/>
            <person name="Brammar W.J."/>
        </authorList>
    </citation>
    <scope>NUCLEOTIDE SEQUENCE [GENOMIC DNA] OF 1-30</scope>
</reference>
<reference key="6">
    <citation type="journal article" date="1984" name="Mol. Cell. Biol.">
        <title>Expression of tissue-specific Ren-1 and Ren-2 genes of mice: comparative analysis of 5'-proximal flanking regions.</title>
        <authorList>
            <person name="Field L.J."/>
            <person name="Philbrick W.M."/>
            <person name="Howles P.N."/>
            <person name="Dickinson D.P."/>
            <person name="McGowan R.A."/>
            <person name="Gross K.W."/>
        </authorList>
    </citation>
    <scope>NUCLEOTIDE SEQUENCE OF 1-30</scope>
    <scope>TISSUE SPECIFICITY</scope>
</reference>
<reference key="7">
    <citation type="journal article" date="1983" name="EMBO J.">
        <title>Kidney and submaxillary gland renins are encoded by two non-allelic genes in Swiss mice.</title>
        <authorList>
            <person name="Panthier J.J."/>
            <person name="Rougeon F."/>
        </authorList>
    </citation>
    <scope>NUCLEOTIDE SEQUENCE [MRNA] OF 267-292</scope>
</reference>
<reference key="8">
    <citation type="journal article" date="2010" name="Cell">
        <title>A tissue-specific atlas of mouse protein phosphorylation and expression.</title>
        <authorList>
            <person name="Huttlin E.L."/>
            <person name="Jedrychowski M.P."/>
            <person name="Elias J.E."/>
            <person name="Goswami T."/>
            <person name="Rad R."/>
            <person name="Beausoleil S.A."/>
            <person name="Villen J."/>
            <person name="Haas W."/>
            <person name="Sowa M.E."/>
            <person name="Gygi S.P."/>
        </authorList>
    </citation>
    <scope>IDENTIFICATION BY MASS SPECTROMETRY [LARGE SCALE ANALYSIS]</scope>
    <source>
        <tissue>Kidney</tissue>
    </source>
</reference>
<reference key="9">
    <citation type="journal article" date="1992" name="Nature">
        <title>X-ray analyses of peptide-inhibitor complexes define the structural basis of specificity for human and mouse renins.</title>
        <authorList>
            <person name="Dhanaraj V."/>
            <person name="Dealwis C.G."/>
            <person name="Frazao C."/>
            <person name="Badasso M."/>
            <person name="Sibanda B.L."/>
            <person name="Tickle I.J."/>
            <person name="Cooper J.B."/>
            <person name="Driessen H.P.C."/>
            <person name="Newman M."/>
            <person name="Aguilar C."/>
            <person name="Wood S.P."/>
            <person name="Blundell T.L."/>
            <person name="Hobart P.M."/>
            <person name="Geoghegan K.F."/>
            <person name="Ammirati M.J."/>
            <person name="Danley D.E."/>
            <person name="O'Connor B.A."/>
            <person name="Hoover D.J."/>
        </authorList>
    </citation>
    <scope>X-RAY CRYSTALLOGRAPHY (1.9 ANGSTROMS)</scope>
    <scope>ACTIVE SITES</scope>
    <scope>DISULFIDE BONDS</scope>
</reference>
<dbReference type="EC" id="3.4.23.15" evidence="1"/>
<dbReference type="EMBL" id="J00621">
    <property type="protein sequence ID" value="AAA40050.1"/>
    <property type="molecule type" value="mRNA"/>
</dbReference>
<dbReference type="EMBL" id="BC011157">
    <property type="protein sequence ID" value="AAH11157.1"/>
    <property type="molecule type" value="mRNA"/>
</dbReference>
<dbReference type="EMBL" id="K02597">
    <property type="protein sequence ID" value="AAA40048.1"/>
    <property type="molecule type" value="Genomic_DNA"/>
</dbReference>
<dbReference type="EMBL" id="M34191">
    <property type="protein sequence ID" value="AAA40046.1"/>
    <property type="molecule type" value="Genomic_DNA"/>
</dbReference>
<dbReference type="EMBL" id="AF237860">
    <property type="protein sequence ID" value="AAA40047.1"/>
    <property type="molecule type" value="Genomic_DNA"/>
</dbReference>
<dbReference type="PIR" id="A93923">
    <property type="entry name" value="REMSS"/>
</dbReference>
<dbReference type="PIR" id="I77411">
    <property type="entry name" value="I77411"/>
</dbReference>
<dbReference type="RefSeq" id="NP_112470.2">
    <property type="nucleotide sequence ID" value="NM_031193.2"/>
</dbReference>
<dbReference type="PDB" id="1SMR">
    <property type="method" value="X-ray"/>
    <property type="resolution" value="2.00 A"/>
    <property type="chains" value="A/C/E/G=67-401"/>
</dbReference>
<dbReference type="PDBsum" id="1SMR"/>
<dbReference type="SMR" id="P00796"/>
<dbReference type="ELM" id="P00796"/>
<dbReference type="FunCoup" id="P00796">
    <property type="interactions" value="17"/>
</dbReference>
<dbReference type="MEROPS" id="A01.008"/>
<dbReference type="CPTAC" id="non-CPTAC-3737"/>
<dbReference type="jPOST" id="P00796"/>
<dbReference type="PeptideAtlas" id="P00796"/>
<dbReference type="ProteomicsDB" id="253113"/>
<dbReference type="DNASU" id="19702"/>
<dbReference type="GeneID" id="19702"/>
<dbReference type="KEGG" id="mmu:19702"/>
<dbReference type="AGR" id="MGI:97899"/>
<dbReference type="CTD" id="19702"/>
<dbReference type="MGI" id="MGI:97899">
    <property type="gene designation" value="Ren2"/>
</dbReference>
<dbReference type="InParanoid" id="P00796"/>
<dbReference type="BioCyc" id="MetaCyc:MONOMER-12952"/>
<dbReference type="BioGRID-ORCS" id="19702">
    <property type="hits" value="0 hits in 15 CRISPR screens"/>
</dbReference>
<dbReference type="EvolutionaryTrace" id="P00796"/>
<dbReference type="PRO" id="PR:P00796"/>
<dbReference type="Proteomes" id="UP000000589">
    <property type="component" value="Unplaced"/>
</dbReference>
<dbReference type="RNAct" id="P00796">
    <property type="molecule type" value="protein"/>
</dbReference>
<dbReference type="GO" id="GO:0005615">
    <property type="term" value="C:extracellular space"/>
    <property type="evidence" value="ECO:0000314"/>
    <property type="project" value="MGI"/>
</dbReference>
<dbReference type="GO" id="GO:0004190">
    <property type="term" value="F:aspartic-type endopeptidase activity"/>
    <property type="evidence" value="ECO:0007669"/>
    <property type="project" value="UniProtKB-KW"/>
</dbReference>
<dbReference type="GO" id="GO:0004175">
    <property type="term" value="F:endopeptidase activity"/>
    <property type="evidence" value="ECO:0000314"/>
    <property type="project" value="MGI"/>
</dbReference>
<dbReference type="GO" id="GO:0010467">
    <property type="term" value="P:gene expression"/>
    <property type="evidence" value="ECO:0000315"/>
    <property type="project" value="MGI"/>
</dbReference>
<dbReference type="GO" id="GO:0045777">
    <property type="term" value="P:positive regulation of blood pressure"/>
    <property type="evidence" value="ECO:0000314"/>
    <property type="project" value="MGI"/>
</dbReference>
<dbReference type="GO" id="GO:0006508">
    <property type="term" value="P:proteolysis"/>
    <property type="evidence" value="ECO:0007669"/>
    <property type="project" value="UniProtKB-KW"/>
</dbReference>
<dbReference type="CDD" id="cd05487">
    <property type="entry name" value="renin_like"/>
    <property type="match status" value="1"/>
</dbReference>
<dbReference type="FunFam" id="2.40.70.10:FF:000037">
    <property type="entry name" value="Renin"/>
    <property type="match status" value="1"/>
</dbReference>
<dbReference type="FunFam" id="2.40.70.10:FF:000032">
    <property type="entry name" value="renin"/>
    <property type="match status" value="1"/>
</dbReference>
<dbReference type="Gene3D" id="2.40.70.10">
    <property type="entry name" value="Acid Proteases"/>
    <property type="match status" value="2"/>
</dbReference>
<dbReference type="InterPro" id="IPR001461">
    <property type="entry name" value="Aspartic_peptidase_A1"/>
</dbReference>
<dbReference type="InterPro" id="IPR001969">
    <property type="entry name" value="Aspartic_peptidase_AS"/>
</dbReference>
<dbReference type="InterPro" id="IPR012848">
    <property type="entry name" value="Aspartic_peptidase_N"/>
</dbReference>
<dbReference type="InterPro" id="IPR033121">
    <property type="entry name" value="PEPTIDASE_A1"/>
</dbReference>
<dbReference type="InterPro" id="IPR021109">
    <property type="entry name" value="Peptidase_aspartic_dom_sf"/>
</dbReference>
<dbReference type="InterPro" id="IPR034135">
    <property type="entry name" value="Renin-like_dom"/>
</dbReference>
<dbReference type="PANTHER" id="PTHR47966">
    <property type="entry name" value="BETA-SITE APP-CLEAVING ENZYME, ISOFORM A-RELATED"/>
    <property type="match status" value="1"/>
</dbReference>
<dbReference type="PANTHER" id="PTHR47966:SF24">
    <property type="entry name" value="RENIN"/>
    <property type="match status" value="1"/>
</dbReference>
<dbReference type="Pfam" id="PF07966">
    <property type="entry name" value="A1_Propeptide"/>
    <property type="match status" value="1"/>
</dbReference>
<dbReference type="Pfam" id="PF00026">
    <property type="entry name" value="Asp"/>
    <property type="match status" value="1"/>
</dbReference>
<dbReference type="PRINTS" id="PR00792">
    <property type="entry name" value="PEPSIN"/>
</dbReference>
<dbReference type="SUPFAM" id="SSF50630">
    <property type="entry name" value="Acid proteases"/>
    <property type="match status" value="1"/>
</dbReference>
<dbReference type="PROSITE" id="PS00141">
    <property type="entry name" value="ASP_PROTEASE"/>
    <property type="match status" value="2"/>
</dbReference>
<dbReference type="PROSITE" id="PS51767">
    <property type="entry name" value="PEPTIDASE_A1"/>
    <property type="match status" value="1"/>
</dbReference>
<evidence type="ECO:0000250" key="1">
    <source>
        <dbReference type="UniProtKB" id="P00797"/>
    </source>
</evidence>
<evidence type="ECO:0000255" key="2">
    <source>
        <dbReference type="PROSITE-ProRule" id="PRU01103"/>
    </source>
</evidence>
<evidence type="ECO:0000269" key="3">
    <source>
    </source>
</evidence>
<evidence type="ECO:0000269" key="4">
    <source>
    </source>
</evidence>
<evidence type="ECO:0000269" key="5">
    <source>
    </source>
</evidence>
<evidence type="ECO:0000303" key="6">
    <source>
    </source>
</evidence>
<evidence type="ECO:0000305" key="7"/>
<evidence type="ECO:0000305" key="8">
    <source>
    </source>
</evidence>
<evidence type="ECO:0000312" key="9">
    <source>
        <dbReference type="MGI" id="MGI:97899"/>
    </source>
</evidence>
<evidence type="ECO:0007829" key="10">
    <source>
        <dbReference type="PDB" id="1SMR"/>
    </source>
</evidence>
<gene>
    <name evidence="6 9" type="primary">Ren2</name>
    <name evidence="6" type="synonym">Ren-2</name>
</gene>
<proteinExistence type="evidence at protein level"/>